<organism>
    <name type="scientific">Caenorhabditis elegans</name>
    <dbReference type="NCBI Taxonomy" id="6239"/>
    <lineage>
        <taxon>Eukaryota</taxon>
        <taxon>Metazoa</taxon>
        <taxon>Ecdysozoa</taxon>
        <taxon>Nematoda</taxon>
        <taxon>Chromadorea</taxon>
        <taxon>Rhabditida</taxon>
        <taxon>Rhabditina</taxon>
        <taxon>Rhabditomorpha</taxon>
        <taxon>Rhabditoidea</taxon>
        <taxon>Rhabditidae</taxon>
        <taxon>Peloderinae</taxon>
        <taxon>Caenorhabditis</taxon>
    </lineage>
</organism>
<sequence>MSAVNSEATTNLLAEFQKLRGETIGLHSIFSEKSTVDISNLNGNTTLKRIEDSCEELKNEIREHVQVSSDELKSIRTANSGFLNKIEESLKTSQQEAREDLKAIEKKNESLLNKSLNELKFQKEQLKYVEATLISQQKLIEHMAKELTGKSISDMVKNNEDDGTHFEFSHTFNSVATLEKGVERRSELKEGCGSLNWFMSIKRERPSRKLLVYLNLDCEKLPTNNWIIEADIQCTLNQYYFNEWVRKFERKEDAIFKCENGEYTDKLVFNFGEYEEILRTFTKNGVWNIEFDVDIIKTVGLSKKKLRCFDESAAEVSDAVMIVKDEKFHVSKMFLAAQSSNFKLLFKNSNNSEFTLDGINSEDFQCFLELLYGEPALTGRLLNN</sequence>
<evidence type="ECO:0000255" key="1"/>
<evidence type="ECO:0000255" key="2">
    <source>
        <dbReference type="PROSITE-ProRule" id="PRU00037"/>
    </source>
</evidence>
<reference key="1">
    <citation type="journal article" date="1998" name="Science">
        <title>Genome sequence of the nematode C. elegans: a platform for investigating biology.</title>
        <authorList>
            <consortium name="The C. elegans sequencing consortium"/>
        </authorList>
    </citation>
    <scope>NUCLEOTIDE SEQUENCE [LARGE SCALE GENOMIC DNA]</scope>
    <source>
        <strain>Bristol N2</strain>
    </source>
</reference>
<dbReference type="EMBL" id="Z82062">
    <property type="protein sequence ID" value="CAB04892.1"/>
    <property type="molecule type" value="Genomic_DNA"/>
</dbReference>
<dbReference type="PIR" id="T26070">
    <property type="entry name" value="T26070"/>
</dbReference>
<dbReference type="RefSeq" id="NP_001293156.1">
    <property type="nucleotide sequence ID" value="NM_001306227.3"/>
</dbReference>
<dbReference type="SMR" id="Q9XUM6"/>
<dbReference type="FunCoup" id="Q9XUM6">
    <property type="interactions" value="314"/>
</dbReference>
<dbReference type="PaxDb" id="6239-W02A11.5"/>
<dbReference type="EnsemblMetazoa" id="W02A11.5.1">
    <property type="protein sequence ID" value="W02A11.5.1"/>
    <property type="gene ID" value="WBGene00012195"/>
</dbReference>
<dbReference type="GeneID" id="24104971"/>
<dbReference type="KEGG" id="cel:CELE_W02A11.5"/>
<dbReference type="UCSC" id="W02A11.5">
    <property type="organism name" value="c. elegans"/>
</dbReference>
<dbReference type="AGR" id="WB:WBGene00012195"/>
<dbReference type="CTD" id="24104971"/>
<dbReference type="WormBase" id="W02A11.5">
    <property type="protein sequence ID" value="CE18992"/>
    <property type="gene ID" value="WBGene00012195"/>
    <property type="gene designation" value="bath-34"/>
</dbReference>
<dbReference type="GeneTree" id="ENSGT00730000111372"/>
<dbReference type="HOGENOM" id="CLU_720093_0_0_1"/>
<dbReference type="InParanoid" id="Q9XUM6"/>
<dbReference type="OrthoDB" id="409824at2759"/>
<dbReference type="PhylomeDB" id="Q9XUM6"/>
<dbReference type="PRO" id="PR:Q9XUM6"/>
<dbReference type="Proteomes" id="UP000001940">
    <property type="component" value="Chromosome I"/>
</dbReference>
<dbReference type="Bgee" id="WBGene00012195">
    <property type="expression patterns" value="Expressed in adult organism and 4 other cell types or tissues"/>
</dbReference>
<dbReference type="CDD" id="cd18186">
    <property type="entry name" value="BTB_POZ_ZBTB_KLHL-like"/>
    <property type="match status" value="1"/>
</dbReference>
<dbReference type="Gene3D" id="3.30.710.10">
    <property type="entry name" value="Potassium Channel Kv1.1, Chain A"/>
    <property type="match status" value="1"/>
</dbReference>
<dbReference type="InterPro" id="IPR052664">
    <property type="entry name" value="BTB-MATH_domain_protein"/>
</dbReference>
<dbReference type="InterPro" id="IPR000210">
    <property type="entry name" value="BTB/POZ_dom"/>
</dbReference>
<dbReference type="InterPro" id="IPR002083">
    <property type="entry name" value="MATH/TRAF_dom"/>
</dbReference>
<dbReference type="InterPro" id="IPR011333">
    <property type="entry name" value="SKP1/BTB/POZ_sf"/>
</dbReference>
<dbReference type="PANTHER" id="PTHR22743:SF173">
    <property type="entry name" value="BTB AND MATH DOMAIN-CONTAINING PROTEIN 34-RELATED"/>
    <property type="match status" value="1"/>
</dbReference>
<dbReference type="PANTHER" id="PTHR22743">
    <property type="entry name" value="MEPRIN/TRAF-LIKE MATH FAMILY-C.ELEGANS"/>
    <property type="match status" value="1"/>
</dbReference>
<dbReference type="Pfam" id="PF00651">
    <property type="entry name" value="BTB"/>
    <property type="match status" value="1"/>
</dbReference>
<dbReference type="SMART" id="SM00061">
    <property type="entry name" value="MATH"/>
    <property type="match status" value="1"/>
</dbReference>
<dbReference type="SUPFAM" id="SSF54695">
    <property type="entry name" value="POZ domain"/>
    <property type="match status" value="1"/>
</dbReference>
<dbReference type="PROSITE" id="PS50097">
    <property type="entry name" value="BTB"/>
    <property type="match status" value="1"/>
</dbReference>
<gene>
    <name type="primary">bath-34</name>
    <name type="ORF">W02A11.5</name>
</gene>
<keyword id="KW-0175">Coiled coil</keyword>
<keyword id="KW-1185">Reference proteome</keyword>
<accession>Q9XUM6</accession>
<protein>
    <recommendedName>
        <fullName>BTB and MATH domain-containing protein 34</fullName>
    </recommendedName>
</protein>
<proteinExistence type="predicted"/>
<feature type="chain" id="PRO_0000246697" description="BTB and MATH domain-containing protein 34">
    <location>
        <begin position="1"/>
        <end position="384"/>
    </location>
</feature>
<feature type="domain" description="MATH">
    <location>
        <begin position="167"/>
        <end position="277"/>
    </location>
</feature>
<feature type="domain" description="BTB" evidence="2">
    <location>
        <begin position="317"/>
        <end position="380"/>
    </location>
</feature>
<feature type="coiled-coil region" evidence="1">
    <location>
        <begin position="41"/>
        <end position="127"/>
    </location>
</feature>
<name>BAT34_CAEEL</name>